<proteinExistence type="inferred from homology"/>
<reference key="1">
    <citation type="journal article" date="2006" name="Nat. Biotechnol.">
        <title>Complete genome of the mutualistic, N2-fixing grass endophyte Azoarcus sp. strain BH72.</title>
        <authorList>
            <person name="Krause A."/>
            <person name="Ramakumar A."/>
            <person name="Bartels D."/>
            <person name="Battistoni F."/>
            <person name="Bekel T."/>
            <person name="Boch J."/>
            <person name="Boehm M."/>
            <person name="Friedrich F."/>
            <person name="Hurek T."/>
            <person name="Krause L."/>
            <person name="Linke B."/>
            <person name="McHardy A.C."/>
            <person name="Sarkar A."/>
            <person name="Schneiker S."/>
            <person name="Syed A.A."/>
            <person name="Thauer R."/>
            <person name="Vorhoelter F.-J."/>
            <person name="Weidner S."/>
            <person name="Puehler A."/>
            <person name="Reinhold-Hurek B."/>
            <person name="Kaiser O."/>
            <person name="Goesmann A."/>
        </authorList>
    </citation>
    <scope>NUCLEOTIDE SEQUENCE [LARGE SCALE GENOMIC DNA]</scope>
    <source>
        <strain>BH72</strain>
    </source>
</reference>
<gene>
    <name evidence="1" type="primary">ilvC</name>
    <name type="ordered locus">azo3156</name>
</gene>
<accession>A1KAB7</accession>
<protein>
    <recommendedName>
        <fullName evidence="1">Ketol-acid reductoisomerase (NADP(+))</fullName>
        <shortName evidence="1">KARI</shortName>
        <ecNumber evidence="1">1.1.1.86</ecNumber>
    </recommendedName>
    <alternativeName>
        <fullName evidence="1">Acetohydroxy-acid isomeroreductase</fullName>
        <shortName evidence="1">AHIR</shortName>
    </alternativeName>
    <alternativeName>
        <fullName evidence="1">Alpha-keto-beta-hydroxylacyl reductoisomerase</fullName>
    </alternativeName>
    <alternativeName>
        <fullName evidence="1">Ketol-acid reductoisomerase type 1</fullName>
    </alternativeName>
    <alternativeName>
        <fullName evidence="1">Ketol-acid reductoisomerase type I</fullName>
    </alternativeName>
</protein>
<dbReference type="EC" id="1.1.1.86" evidence="1"/>
<dbReference type="EMBL" id="AM406670">
    <property type="protein sequence ID" value="CAL95773.1"/>
    <property type="molecule type" value="Genomic_DNA"/>
</dbReference>
<dbReference type="RefSeq" id="WP_011766881.1">
    <property type="nucleotide sequence ID" value="NC_008702.1"/>
</dbReference>
<dbReference type="SMR" id="A1KAB7"/>
<dbReference type="STRING" id="62928.azo3156"/>
<dbReference type="KEGG" id="aoa:dqs_3288"/>
<dbReference type="KEGG" id="azo:azo3156"/>
<dbReference type="eggNOG" id="COG0059">
    <property type="taxonomic scope" value="Bacteria"/>
</dbReference>
<dbReference type="HOGENOM" id="CLU_033821_0_1_4"/>
<dbReference type="OrthoDB" id="9804088at2"/>
<dbReference type="UniPathway" id="UPA00047">
    <property type="reaction ID" value="UER00056"/>
</dbReference>
<dbReference type="UniPathway" id="UPA00049">
    <property type="reaction ID" value="UER00060"/>
</dbReference>
<dbReference type="Proteomes" id="UP000002588">
    <property type="component" value="Chromosome"/>
</dbReference>
<dbReference type="GO" id="GO:0005829">
    <property type="term" value="C:cytosol"/>
    <property type="evidence" value="ECO:0007669"/>
    <property type="project" value="TreeGrafter"/>
</dbReference>
<dbReference type="GO" id="GO:0004455">
    <property type="term" value="F:ketol-acid reductoisomerase activity"/>
    <property type="evidence" value="ECO:0007669"/>
    <property type="project" value="UniProtKB-UniRule"/>
</dbReference>
<dbReference type="GO" id="GO:0000287">
    <property type="term" value="F:magnesium ion binding"/>
    <property type="evidence" value="ECO:0007669"/>
    <property type="project" value="UniProtKB-UniRule"/>
</dbReference>
<dbReference type="GO" id="GO:0050661">
    <property type="term" value="F:NADP binding"/>
    <property type="evidence" value="ECO:0007669"/>
    <property type="project" value="InterPro"/>
</dbReference>
<dbReference type="GO" id="GO:0009097">
    <property type="term" value="P:isoleucine biosynthetic process"/>
    <property type="evidence" value="ECO:0007669"/>
    <property type="project" value="UniProtKB-UniRule"/>
</dbReference>
<dbReference type="GO" id="GO:0009099">
    <property type="term" value="P:L-valine biosynthetic process"/>
    <property type="evidence" value="ECO:0007669"/>
    <property type="project" value="UniProtKB-UniRule"/>
</dbReference>
<dbReference type="FunFam" id="3.40.50.720:FF:000023">
    <property type="entry name" value="Ketol-acid reductoisomerase (NADP(+))"/>
    <property type="match status" value="1"/>
</dbReference>
<dbReference type="Gene3D" id="6.10.240.10">
    <property type="match status" value="1"/>
</dbReference>
<dbReference type="Gene3D" id="3.40.50.720">
    <property type="entry name" value="NAD(P)-binding Rossmann-like Domain"/>
    <property type="match status" value="1"/>
</dbReference>
<dbReference type="HAMAP" id="MF_00435">
    <property type="entry name" value="IlvC"/>
    <property type="match status" value="1"/>
</dbReference>
<dbReference type="InterPro" id="IPR008927">
    <property type="entry name" value="6-PGluconate_DH-like_C_sf"/>
</dbReference>
<dbReference type="InterPro" id="IPR013023">
    <property type="entry name" value="KARI"/>
</dbReference>
<dbReference type="InterPro" id="IPR000506">
    <property type="entry name" value="KARI_C"/>
</dbReference>
<dbReference type="InterPro" id="IPR013116">
    <property type="entry name" value="KARI_N"/>
</dbReference>
<dbReference type="InterPro" id="IPR014359">
    <property type="entry name" value="KARI_prok"/>
</dbReference>
<dbReference type="InterPro" id="IPR036291">
    <property type="entry name" value="NAD(P)-bd_dom_sf"/>
</dbReference>
<dbReference type="NCBIfam" id="TIGR00465">
    <property type="entry name" value="ilvC"/>
    <property type="match status" value="1"/>
</dbReference>
<dbReference type="NCBIfam" id="NF004017">
    <property type="entry name" value="PRK05479.1"/>
    <property type="match status" value="1"/>
</dbReference>
<dbReference type="NCBIfam" id="NF009940">
    <property type="entry name" value="PRK13403.1"/>
    <property type="match status" value="1"/>
</dbReference>
<dbReference type="PANTHER" id="PTHR21371">
    <property type="entry name" value="KETOL-ACID REDUCTOISOMERASE, MITOCHONDRIAL"/>
    <property type="match status" value="1"/>
</dbReference>
<dbReference type="PANTHER" id="PTHR21371:SF1">
    <property type="entry name" value="KETOL-ACID REDUCTOISOMERASE, MITOCHONDRIAL"/>
    <property type="match status" value="1"/>
</dbReference>
<dbReference type="Pfam" id="PF01450">
    <property type="entry name" value="KARI_C"/>
    <property type="match status" value="1"/>
</dbReference>
<dbReference type="Pfam" id="PF07991">
    <property type="entry name" value="KARI_N"/>
    <property type="match status" value="1"/>
</dbReference>
<dbReference type="PIRSF" id="PIRSF000116">
    <property type="entry name" value="IlvC_gammaproteo"/>
    <property type="match status" value="1"/>
</dbReference>
<dbReference type="SUPFAM" id="SSF48179">
    <property type="entry name" value="6-phosphogluconate dehydrogenase C-terminal domain-like"/>
    <property type="match status" value="1"/>
</dbReference>
<dbReference type="SUPFAM" id="SSF51735">
    <property type="entry name" value="NAD(P)-binding Rossmann-fold domains"/>
    <property type="match status" value="1"/>
</dbReference>
<dbReference type="PROSITE" id="PS51851">
    <property type="entry name" value="KARI_C"/>
    <property type="match status" value="1"/>
</dbReference>
<dbReference type="PROSITE" id="PS51850">
    <property type="entry name" value="KARI_N"/>
    <property type="match status" value="1"/>
</dbReference>
<sequence>MKVYYDKDADLSLIKGKKVTIVGYGSQGHAHAQNLNDSGVKVTVAVRKGGASWDKAKAAGLKVEEIAKAVKTADLVMILLPDENIPQVYKEEVEPNIKKGATLAFAHGFNVHYNQVVPREDLDVIMVAPKGPGHTVRSEYLRGGGVPSLIAVYQDKSGKAKDIALSYAAANGGTKGGVIETNFKEETETDLFGEQAVLCGGAVELVKMGFETLTEAGYAPEMAYFECLHELKLIVDLMYEGGIANMNYSISNNAEYGEYVTGPEVINAQSREAMRNALKRIQTGEYAKMFIQEGKTNYPSMTARRRLNAEHPIEQVGGQLRDMMPWIKAKALVDKSKN</sequence>
<keyword id="KW-0028">Amino-acid biosynthesis</keyword>
<keyword id="KW-0100">Branched-chain amino acid biosynthesis</keyword>
<keyword id="KW-0460">Magnesium</keyword>
<keyword id="KW-0479">Metal-binding</keyword>
<keyword id="KW-0521">NADP</keyword>
<keyword id="KW-0560">Oxidoreductase</keyword>
<keyword id="KW-1185">Reference proteome</keyword>
<comment type="function">
    <text evidence="1">Involved in the biosynthesis of branched-chain amino acids (BCAA). Catalyzes an alkyl-migration followed by a ketol-acid reduction of (S)-2-acetolactate (S2AL) to yield (R)-2,3-dihydroxy-isovalerate. In the isomerase reaction, S2AL is rearranged via a Mg-dependent methyl migration to produce 3-hydroxy-3-methyl-2-ketobutyrate (HMKB). In the reductase reaction, this 2-ketoacid undergoes a metal-dependent reduction by NADPH to yield (R)-2,3-dihydroxy-isovalerate.</text>
</comment>
<comment type="catalytic activity">
    <reaction evidence="1">
        <text>(2R)-2,3-dihydroxy-3-methylbutanoate + NADP(+) = (2S)-2-acetolactate + NADPH + H(+)</text>
        <dbReference type="Rhea" id="RHEA:22068"/>
        <dbReference type="ChEBI" id="CHEBI:15378"/>
        <dbReference type="ChEBI" id="CHEBI:49072"/>
        <dbReference type="ChEBI" id="CHEBI:57783"/>
        <dbReference type="ChEBI" id="CHEBI:58349"/>
        <dbReference type="ChEBI" id="CHEBI:58476"/>
        <dbReference type="EC" id="1.1.1.86"/>
    </reaction>
</comment>
<comment type="catalytic activity">
    <reaction evidence="1">
        <text>(2R,3R)-2,3-dihydroxy-3-methylpentanoate + NADP(+) = (S)-2-ethyl-2-hydroxy-3-oxobutanoate + NADPH + H(+)</text>
        <dbReference type="Rhea" id="RHEA:13493"/>
        <dbReference type="ChEBI" id="CHEBI:15378"/>
        <dbReference type="ChEBI" id="CHEBI:49256"/>
        <dbReference type="ChEBI" id="CHEBI:49258"/>
        <dbReference type="ChEBI" id="CHEBI:57783"/>
        <dbReference type="ChEBI" id="CHEBI:58349"/>
        <dbReference type="EC" id="1.1.1.86"/>
    </reaction>
</comment>
<comment type="cofactor">
    <cofactor evidence="1">
        <name>Mg(2+)</name>
        <dbReference type="ChEBI" id="CHEBI:18420"/>
    </cofactor>
    <text evidence="1">Binds 2 magnesium ions per subunit.</text>
</comment>
<comment type="pathway">
    <text evidence="1">Amino-acid biosynthesis; L-isoleucine biosynthesis; L-isoleucine from 2-oxobutanoate: step 2/4.</text>
</comment>
<comment type="pathway">
    <text evidence="1">Amino-acid biosynthesis; L-valine biosynthesis; L-valine from pyruvate: step 2/4.</text>
</comment>
<comment type="similarity">
    <text evidence="1">Belongs to the ketol-acid reductoisomerase family.</text>
</comment>
<feature type="chain" id="PRO_1000050478" description="Ketol-acid reductoisomerase (NADP(+))">
    <location>
        <begin position="1"/>
        <end position="338"/>
    </location>
</feature>
<feature type="domain" description="KARI N-terminal Rossmann" evidence="2">
    <location>
        <begin position="1"/>
        <end position="181"/>
    </location>
</feature>
<feature type="domain" description="KARI C-terminal knotted" evidence="3">
    <location>
        <begin position="182"/>
        <end position="327"/>
    </location>
</feature>
<feature type="active site" evidence="1">
    <location>
        <position position="107"/>
    </location>
</feature>
<feature type="binding site" evidence="1">
    <location>
        <begin position="24"/>
        <end position="27"/>
    </location>
    <ligand>
        <name>NADP(+)</name>
        <dbReference type="ChEBI" id="CHEBI:58349"/>
    </ligand>
</feature>
<feature type="binding site" evidence="1">
    <location>
        <position position="47"/>
    </location>
    <ligand>
        <name>NADP(+)</name>
        <dbReference type="ChEBI" id="CHEBI:58349"/>
    </ligand>
</feature>
<feature type="binding site" evidence="1">
    <location>
        <position position="52"/>
    </location>
    <ligand>
        <name>NADP(+)</name>
        <dbReference type="ChEBI" id="CHEBI:58349"/>
    </ligand>
</feature>
<feature type="binding site" evidence="1">
    <location>
        <position position="133"/>
    </location>
    <ligand>
        <name>NADP(+)</name>
        <dbReference type="ChEBI" id="CHEBI:58349"/>
    </ligand>
</feature>
<feature type="binding site" evidence="1">
    <location>
        <position position="190"/>
    </location>
    <ligand>
        <name>Mg(2+)</name>
        <dbReference type="ChEBI" id="CHEBI:18420"/>
        <label>1</label>
    </ligand>
</feature>
<feature type="binding site" evidence="1">
    <location>
        <position position="190"/>
    </location>
    <ligand>
        <name>Mg(2+)</name>
        <dbReference type="ChEBI" id="CHEBI:18420"/>
        <label>2</label>
    </ligand>
</feature>
<feature type="binding site" evidence="1">
    <location>
        <position position="194"/>
    </location>
    <ligand>
        <name>Mg(2+)</name>
        <dbReference type="ChEBI" id="CHEBI:18420"/>
        <label>1</label>
    </ligand>
</feature>
<feature type="binding site" evidence="1">
    <location>
        <position position="226"/>
    </location>
    <ligand>
        <name>Mg(2+)</name>
        <dbReference type="ChEBI" id="CHEBI:18420"/>
        <label>2</label>
    </ligand>
</feature>
<feature type="binding site" evidence="1">
    <location>
        <position position="230"/>
    </location>
    <ligand>
        <name>Mg(2+)</name>
        <dbReference type="ChEBI" id="CHEBI:18420"/>
        <label>2</label>
    </ligand>
</feature>
<feature type="binding site" evidence="1">
    <location>
        <position position="251"/>
    </location>
    <ligand>
        <name>substrate</name>
    </ligand>
</feature>
<organism>
    <name type="scientific">Azoarcus sp. (strain BH72)</name>
    <dbReference type="NCBI Taxonomy" id="418699"/>
    <lineage>
        <taxon>Bacteria</taxon>
        <taxon>Pseudomonadati</taxon>
        <taxon>Pseudomonadota</taxon>
        <taxon>Betaproteobacteria</taxon>
        <taxon>Rhodocyclales</taxon>
        <taxon>Zoogloeaceae</taxon>
        <taxon>Azoarcus</taxon>
    </lineage>
</organism>
<name>ILVC_AZOSB</name>
<evidence type="ECO:0000255" key="1">
    <source>
        <dbReference type="HAMAP-Rule" id="MF_00435"/>
    </source>
</evidence>
<evidence type="ECO:0000255" key="2">
    <source>
        <dbReference type="PROSITE-ProRule" id="PRU01197"/>
    </source>
</evidence>
<evidence type="ECO:0000255" key="3">
    <source>
        <dbReference type="PROSITE-ProRule" id="PRU01198"/>
    </source>
</evidence>